<comment type="function">
    <text evidence="1">One of two assembly initiator proteins, it binds directly to the 5'-end of the 23S rRNA, where it nucleates assembly of the 50S subunit.</text>
</comment>
<comment type="function">
    <text evidence="1">One of the proteins that surrounds the polypeptide exit tunnel on the outside of the subunit.</text>
</comment>
<comment type="subunit">
    <text evidence="1">Part of the 50S ribosomal subunit.</text>
</comment>
<comment type="similarity">
    <text evidence="1">Belongs to the universal ribosomal protein uL24 family.</text>
</comment>
<gene>
    <name evidence="1" type="primary">rplX</name>
    <name type="ordered locus">amb3119</name>
</gene>
<sequence>MASMNVKKGDRVVVLAGKDKGKKGEVIAAMPSEQRVIVQGVNLVKRHTRPSATSQGGIVEKEASIHVSNVAHEDPKDGKATRIGHKILEDGRKVRVARRSGEVIDR</sequence>
<reference key="1">
    <citation type="journal article" date="2005" name="DNA Res.">
        <title>Complete genome sequence of the facultative anaerobic magnetotactic bacterium Magnetospirillum sp. strain AMB-1.</title>
        <authorList>
            <person name="Matsunaga T."/>
            <person name="Okamura Y."/>
            <person name="Fukuda Y."/>
            <person name="Wahyudi A.T."/>
            <person name="Murase Y."/>
            <person name="Takeyama H."/>
        </authorList>
    </citation>
    <scope>NUCLEOTIDE SEQUENCE [LARGE SCALE GENOMIC DNA]</scope>
    <source>
        <strain>ATCC 700264 / AMB-1</strain>
    </source>
</reference>
<dbReference type="EMBL" id="AP007255">
    <property type="protein sequence ID" value="BAE51923.1"/>
    <property type="molecule type" value="Genomic_DNA"/>
</dbReference>
<dbReference type="RefSeq" id="WP_011385493.1">
    <property type="nucleotide sequence ID" value="NC_007626.1"/>
</dbReference>
<dbReference type="SMR" id="Q2W2K2"/>
<dbReference type="STRING" id="342108.amb3119"/>
<dbReference type="KEGG" id="mag:amb3119"/>
<dbReference type="HOGENOM" id="CLU_093315_2_0_5"/>
<dbReference type="OrthoDB" id="9807419at2"/>
<dbReference type="Proteomes" id="UP000007058">
    <property type="component" value="Chromosome"/>
</dbReference>
<dbReference type="GO" id="GO:1990904">
    <property type="term" value="C:ribonucleoprotein complex"/>
    <property type="evidence" value="ECO:0007669"/>
    <property type="project" value="UniProtKB-KW"/>
</dbReference>
<dbReference type="GO" id="GO:0005840">
    <property type="term" value="C:ribosome"/>
    <property type="evidence" value="ECO:0007669"/>
    <property type="project" value="UniProtKB-KW"/>
</dbReference>
<dbReference type="GO" id="GO:0019843">
    <property type="term" value="F:rRNA binding"/>
    <property type="evidence" value="ECO:0007669"/>
    <property type="project" value="UniProtKB-UniRule"/>
</dbReference>
<dbReference type="GO" id="GO:0003735">
    <property type="term" value="F:structural constituent of ribosome"/>
    <property type="evidence" value="ECO:0007669"/>
    <property type="project" value="InterPro"/>
</dbReference>
<dbReference type="GO" id="GO:0006412">
    <property type="term" value="P:translation"/>
    <property type="evidence" value="ECO:0007669"/>
    <property type="project" value="UniProtKB-UniRule"/>
</dbReference>
<dbReference type="CDD" id="cd06089">
    <property type="entry name" value="KOW_RPL26"/>
    <property type="match status" value="1"/>
</dbReference>
<dbReference type="FunFam" id="2.30.30.30:FF:000004">
    <property type="entry name" value="50S ribosomal protein L24"/>
    <property type="match status" value="1"/>
</dbReference>
<dbReference type="Gene3D" id="2.30.30.30">
    <property type="match status" value="1"/>
</dbReference>
<dbReference type="HAMAP" id="MF_01326_B">
    <property type="entry name" value="Ribosomal_uL24_B"/>
    <property type="match status" value="1"/>
</dbReference>
<dbReference type="InterPro" id="IPR005824">
    <property type="entry name" value="KOW"/>
</dbReference>
<dbReference type="InterPro" id="IPR014722">
    <property type="entry name" value="Rib_uL2_dom2"/>
</dbReference>
<dbReference type="InterPro" id="IPR003256">
    <property type="entry name" value="Ribosomal_uL24"/>
</dbReference>
<dbReference type="InterPro" id="IPR005825">
    <property type="entry name" value="Ribosomal_uL24_CS"/>
</dbReference>
<dbReference type="InterPro" id="IPR041988">
    <property type="entry name" value="Ribosomal_uL24_KOW"/>
</dbReference>
<dbReference type="InterPro" id="IPR008991">
    <property type="entry name" value="Translation_prot_SH3-like_sf"/>
</dbReference>
<dbReference type="NCBIfam" id="TIGR01079">
    <property type="entry name" value="rplX_bact"/>
    <property type="match status" value="1"/>
</dbReference>
<dbReference type="PANTHER" id="PTHR12903">
    <property type="entry name" value="MITOCHONDRIAL RIBOSOMAL PROTEIN L24"/>
    <property type="match status" value="1"/>
</dbReference>
<dbReference type="Pfam" id="PF00467">
    <property type="entry name" value="KOW"/>
    <property type="match status" value="1"/>
</dbReference>
<dbReference type="Pfam" id="PF17136">
    <property type="entry name" value="ribosomal_L24"/>
    <property type="match status" value="1"/>
</dbReference>
<dbReference type="SMART" id="SM00739">
    <property type="entry name" value="KOW"/>
    <property type="match status" value="1"/>
</dbReference>
<dbReference type="SUPFAM" id="SSF50104">
    <property type="entry name" value="Translation proteins SH3-like domain"/>
    <property type="match status" value="1"/>
</dbReference>
<dbReference type="PROSITE" id="PS01108">
    <property type="entry name" value="RIBOSOMAL_L24"/>
    <property type="match status" value="1"/>
</dbReference>
<accession>Q2W2K2</accession>
<feature type="chain" id="PRO_0000241616" description="Large ribosomal subunit protein uL24">
    <location>
        <begin position="1"/>
        <end position="106"/>
    </location>
</feature>
<proteinExistence type="inferred from homology"/>
<organism>
    <name type="scientific">Paramagnetospirillum magneticum (strain ATCC 700264 / AMB-1)</name>
    <name type="common">Magnetospirillum magneticum</name>
    <dbReference type="NCBI Taxonomy" id="342108"/>
    <lineage>
        <taxon>Bacteria</taxon>
        <taxon>Pseudomonadati</taxon>
        <taxon>Pseudomonadota</taxon>
        <taxon>Alphaproteobacteria</taxon>
        <taxon>Rhodospirillales</taxon>
        <taxon>Magnetospirillaceae</taxon>
        <taxon>Paramagnetospirillum</taxon>
    </lineage>
</organism>
<keyword id="KW-0687">Ribonucleoprotein</keyword>
<keyword id="KW-0689">Ribosomal protein</keyword>
<keyword id="KW-0694">RNA-binding</keyword>
<keyword id="KW-0699">rRNA-binding</keyword>
<protein>
    <recommendedName>
        <fullName evidence="1">Large ribosomal subunit protein uL24</fullName>
    </recommendedName>
    <alternativeName>
        <fullName evidence="2">50S ribosomal protein L24</fullName>
    </alternativeName>
</protein>
<evidence type="ECO:0000255" key="1">
    <source>
        <dbReference type="HAMAP-Rule" id="MF_01326"/>
    </source>
</evidence>
<evidence type="ECO:0000305" key="2"/>
<name>RL24_PARM1</name>